<evidence type="ECO:0000255" key="1">
    <source>
        <dbReference type="HAMAP-Rule" id="MF_00165"/>
    </source>
</evidence>
<comment type="function">
    <text evidence="1">Phosphorylation of dTMP to form dTDP in both de novo and salvage pathways of dTTP synthesis.</text>
</comment>
<comment type="catalytic activity">
    <reaction evidence="1">
        <text>dTMP + ATP = dTDP + ADP</text>
        <dbReference type="Rhea" id="RHEA:13517"/>
        <dbReference type="ChEBI" id="CHEBI:30616"/>
        <dbReference type="ChEBI" id="CHEBI:58369"/>
        <dbReference type="ChEBI" id="CHEBI:63528"/>
        <dbReference type="ChEBI" id="CHEBI:456216"/>
        <dbReference type="EC" id="2.7.4.9"/>
    </reaction>
</comment>
<comment type="similarity">
    <text evidence="1">Belongs to the thymidylate kinase family.</text>
</comment>
<dbReference type="EC" id="2.7.4.9" evidence="1"/>
<dbReference type="EMBL" id="FM180568">
    <property type="protein sequence ID" value="CAS08738.1"/>
    <property type="molecule type" value="Genomic_DNA"/>
</dbReference>
<dbReference type="RefSeq" id="WP_001257002.1">
    <property type="nucleotide sequence ID" value="NC_011601.1"/>
</dbReference>
<dbReference type="SMR" id="B7UPB4"/>
<dbReference type="KEGG" id="ecg:E2348C_1190"/>
<dbReference type="HOGENOM" id="CLU_049131_0_1_6"/>
<dbReference type="Proteomes" id="UP000008205">
    <property type="component" value="Chromosome"/>
</dbReference>
<dbReference type="GO" id="GO:0005829">
    <property type="term" value="C:cytosol"/>
    <property type="evidence" value="ECO:0007669"/>
    <property type="project" value="TreeGrafter"/>
</dbReference>
<dbReference type="GO" id="GO:0005524">
    <property type="term" value="F:ATP binding"/>
    <property type="evidence" value="ECO:0007669"/>
    <property type="project" value="UniProtKB-UniRule"/>
</dbReference>
<dbReference type="GO" id="GO:0004798">
    <property type="term" value="F:dTMP kinase activity"/>
    <property type="evidence" value="ECO:0007669"/>
    <property type="project" value="UniProtKB-UniRule"/>
</dbReference>
<dbReference type="GO" id="GO:0006233">
    <property type="term" value="P:dTDP biosynthetic process"/>
    <property type="evidence" value="ECO:0007669"/>
    <property type="project" value="InterPro"/>
</dbReference>
<dbReference type="GO" id="GO:0006235">
    <property type="term" value="P:dTTP biosynthetic process"/>
    <property type="evidence" value="ECO:0007669"/>
    <property type="project" value="UniProtKB-UniRule"/>
</dbReference>
<dbReference type="GO" id="GO:0006227">
    <property type="term" value="P:dUDP biosynthetic process"/>
    <property type="evidence" value="ECO:0007669"/>
    <property type="project" value="TreeGrafter"/>
</dbReference>
<dbReference type="CDD" id="cd01672">
    <property type="entry name" value="TMPK"/>
    <property type="match status" value="1"/>
</dbReference>
<dbReference type="FunFam" id="3.40.50.300:FF:000321">
    <property type="entry name" value="Thymidylate kinase"/>
    <property type="match status" value="1"/>
</dbReference>
<dbReference type="Gene3D" id="3.40.50.300">
    <property type="entry name" value="P-loop containing nucleotide triphosphate hydrolases"/>
    <property type="match status" value="1"/>
</dbReference>
<dbReference type="HAMAP" id="MF_00165">
    <property type="entry name" value="Thymidylate_kinase"/>
    <property type="match status" value="1"/>
</dbReference>
<dbReference type="InterPro" id="IPR027417">
    <property type="entry name" value="P-loop_NTPase"/>
</dbReference>
<dbReference type="InterPro" id="IPR039430">
    <property type="entry name" value="Thymidylate_kin-like_dom"/>
</dbReference>
<dbReference type="InterPro" id="IPR018095">
    <property type="entry name" value="Thymidylate_kin_CS"/>
</dbReference>
<dbReference type="InterPro" id="IPR018094">
    <property type="entry name" value="Thymidylate_kinase"/>
</dbReference>
<dbReference type="NCBIfam" id="TIGR00041">
    <property type="entry name" value="DTMP_kinase"/>
    <property type="match status" value="1"/>
</dbReference>
<dbReference type="PANTHER" id="PTHR10344">
    <property type="entry name" value="THYMIDYLATE KINASE"/>
    <property type="match status" value="1"/>
</dbReference>
<dbReference type="PANTHER" id="PTHR10344:SF4">
    <property type="entry name" value="UMP-CMP KINASE 2, MITOCHONDRIAL"/>
    <property type="match status" value="1"/>
</dbReference>
<dbReference type="Pfam" id="PF02223">
    <property type="entry name" value="Thymidylate_kin"/>
    <property type="match status" value="1"/>
</dbReference>
<dbReference type="SUPFAM" id="SSF52540">
    <property type="entry name" value="P-loop containing nucleoside triphosphate hydrolases"/>
    <property type="match status" value="1"/>
</dbReference>
<dbReference type="PROSITE" id="PS01331">
    <property type="entry name" value="THYMIDYLATE_KINASE"/>
    <property type="match status" value="1"/>
</dbReference>
<protein>
    <recommendedName>
        <fullName evidence="1">Thymidylate kinase</fullName>
        <ecNumber evidence="1">2.7.4.9</ecNumber>
    </recommendedName>
    <alternativeName>
        <fullName evidence="1">dTMP kinase</fullName>
    </alternativeName>
</protein>
<name>KTHY_ECO27</name>
<feature type="chain" id="PRO_1000123570" description="Thymidylate kinase">
    <location>
        <begin position="1"/>
        <end position="213"/>
    </location>
</feature>
<feature type="binding site" evidence="1">
    <location>
        <begin position="10"/>
        <end position="17"/>
    </location>
    <ligand>
        <name>ATP</name>
        <dbReference type="ChEBI" id="CHEBI:30616"/>
    </ligand>
</feature>
<organism>
    <name type="scientific">Escherichia coli O127:H6 (strain E2348/69 / EPEC)</name>
    <dbReference type="NCBI Taxonomy" id="574521"/>
    <lineage>
        <taxon>Bacteria</taxon>
        <taxon>Pseudomonadati</taxon>
        <taxon>Pseudomonadota</taxon>
        <taxon>Gammaproteobacteria</taxon>
        <taxon>Enterobacterales</taxon>
        <taxon>Enterobacteriaceae</taxon>
        <taxon>Escherichia</taxon>
    </lineage>
</organism>
<keyword id="KW-0067">ATP-binding</keyword>
<keyword id="KW-0418">Kinase</keyword>
<keyword id="KW-0545">Nucleotide biosynthesis</keyword>
<keyword id="KW-0547">Nucleotide-binding</keyword>
<keyword id="KW-1185">Reference proteome</keyword>
<keyword id="KW-0808">Transferase</keyword>
<proteinExistence type="inferred from homology"/>
<accession>B7UPB4</accession>
<reference key="1">
    <citation type="journal article" date="2009" name="J. Bacteriol.">
        <title>Complete genome sequence and comparative genome analysis of enteropathogenic Escherichia coli O127:H6 strain E2348/69.</title>
        <authorList>
            <person name="Iguchi A."/>
            <person name="Thomson N.R."/>
            <person name="Ogura Y."/>
            <person name="Saunders D."/>
            <person name="Ooka T."/>
            <person name="Henderson I.R."/>
            <person name="Harris D."/>
            <person name="Asadulghani M."/>
            <person name="Kurokawa K."/>
            <person name="Dean P."/>
            <person name="Kenny B."/>
            <person name="Quail M.A."/>
            <person name="Thurston S."/>
            <person name="Dougan G."/>
            <person name="Hayashi T."/>
            <person name="Parkhill J."/>
            <person name="Frankel G."/>
        </authorList>
    </citation>
    <scope>NUCLEOTIDE SEQUENCE [LARGE SCALE GENOMIC DNA]</scope>
    <source>
        <strain>E2348/69 / EPEC</strain>
    </source>
</reference>
<sequence>MRSKYIVIEGLEGAGKTTARNVVVETLEQLGIRDMVFTREPGGTQLAEKLRSLVLDIKSVGDEVITDKAEVLMFYAARVQLVETVIKPALANGTWVIGDRHDLSTQAYQGGGRGIDQHMLATLRDAVLGDFRPDLTLYLDVTPEVGLKRARARGELDRIEQESFDFFNRTRARYLELAAQDKSIHTIDATQPLEAVMDAIRTTVTNWVKELDA</sequence>
<gene>
    <name evidence="1" type="primary">tmk</name>
    <name type="ordered locus">E2348C_1190</name>
</gene>